<sequence>MKFFAVLALCIVGAIASPLTADEASLVQSSWKAVSHNEVEILAAVFAAYPDIQNKFSQFAGKDLASIKDTGAFATHATRIVSFLSEVIALSGNESNASAVNSLVSKLGDDHKARGVSAAQFGEFRTALVAYLQANVSWGDNVAAAWNKALDNTFAIVVPRL</sequence>
<dbReference type="EMBL" id="U07703">
    <property type="protein sequence ID" value="AAA85488.1"/>
    <property type="molecule type" value="Genomic_DNA"/>
</dbReference>
<dbReference type="SMR" id="Q23762"/>
<dbReference type="GO" id="GO:0005576">
    <property type="term" value="C:extracellular region"/>
    <property type="evidence" value="ECO:0007669"/>
    <property type="project" value="InterPro"/>
</dbReference>
<dbReference type="GO" id="GO:0005833">
    <property type="term" value="C:hemoglobin complex"/>
    <property type="evidence" value="ECO:0007669"/>
    <property type="project" value="InterPro"/>
</dbReference>
<dbReference type="GO" id="GO:0020037">
    <property type="term" value="F:heme binding"/>
    <property type="evidence" value="ECO:0007669"/>
    <property type="project" value="InterPro"/>
</dbReference>
<dbReference type="GO" id="GO:0046872">
    <property type="term" value="F:metal ion binding"/>
    <property type="evidence" value="ECO:0007669"/>
    <property type="project" value="UniProtKB-KW"/>
</dbReference>
<dbReference type="GO" id="GO:0019825">
    <property type="term" value="F:oxygen binding"/>
    <property type="evidence" value="ECO:0007669"/>
    <property type="project" value="InterPro"/>
</dbReference>
<dbReference type="GO" id="GO:0005344">
    <property type="term" value="F:oxygen carrier activity"/>
    <property type="evidence" value="ECO:0007669"/>
    <property type="project" value="UniProtKB-KW"/>
</dbReference>
<dbReference type="CDD" id="cd01040">
    <property type="entry name" value="Mb-like"/>
    <property type="match status" value="1"/>
</dbReference>
<dbReference type="Gene3D" id="1.10.490.10">
    <property type="entry name" value="Globins"/>
    <property type="match status" value="1"/>
</dbReference>
<dbReference type="InterPro" id="IPR002336">
    <property type="entry name" value="Erythrocruorin"/>
</dbReference>
<dbReference type="InterPro" id="IPR000971">
    <property type="entry name" value="Globin"/>
</dbReference>
<dbReference type="InterPro" id="IPR009050">
    <property type="entry name" value="Globin-like_sf"/>
</dbReference>
<dbReference type="InterPro" id="IPR012292">
    <property type="entry name" value="Globin/Proto"/>
</dbReference>
<dbReference type="InterPro" id="IPR044399">
    <property type="entry name" value="Mb-like_M"/>
</dbReference>
<dbReference type="PANTHER" id="PTHR47217">
    <property type="entry name" value="GLOBIN-LIKE PROTEIN"/>
    <property type="match status" value="1"/>
</dbReference>
<dbReference type="PANTHER" id="PTHR47217:SF1">
    <property type="entry name" value="GLOBIN-LIKE PROTEIN"/>
    <property type="match status" value="1"/>
</dbReference>
<dbReference type="Pfam" id="PF00042">
    <property type="entry name" value="Globin"/>
    <property type="match status" value="1"/>
</dbReference>
<dbReference type="PRINTS" id="PR00611">
    <property type="entry name" value="ERYTHCRUORIN"/>
</dbReference>
<dbReference type="SUPFAM" id="SSF46458">
    <property type="entry name" value="Globin-like"/>
    <property type="match status" value="1"/>
</dbReference>
<dbReference type="PROSITE" id="PS01033">
    <property type="entry name" value="GLOBIN"/>
    <property type="match status" value="1"/>
</dbReference>
<gene>
    <name type="primary">CTT-7B10</name>
</gene>
<evidence type="ECO:0000255" key="1">
    <source>
        <dbReference type="PROSITE-ProRule" id="PRU00238"/>
    </source>
</evidence>
<protein>
    <recommendedName>
        <fullName>Globin CTT-VIIB-10</fullName>
    </recommendedName>
</protein>
<organism>
    <name type="scientific">Chironomus thummi thummi</name>
    <name type="common">Midge</name>
    <dbReference type="NCBI Taxonomy" id="7155"/>
    <lineage>
        <taxon>Eukaryota</taxon>
        <taxon>Metazoa</taxon>
        <taxon>Ecdysozoa</taxon>
        <taxon>Arthropoda</taxon>
        <taxon>Hexapoda</taxon>
        <taxon>Insecta</taxon>
        <taxon>Pterygota</taxon>
        <taxon>Neoptera</taxon>
        <taxon>Endopterygota</taxon>
        <taxon>Diptera</taxon>
        <taxon>Nematocera</taxon>
        <taxon>Chironomoidea</taxon>
        <taxon>Chironomidae</taxon>
        <taxon>Chironominae</taxon>
        <taxon>Chironomus</taxon>
    </lineage>
</organism>
<reference key="1">
    <citation type="journal article" date="1995" name="J. Mol. Evol.">
        <title>Molecular evolutionary analysis of the YWVZ/7B globin gene cluster of the insect Chironomus thummi.</title>
        <authorList>
            <person name="Trewitt P.M."/>
            <person name="Luhm R.A."/>
            <person name="Samad F."/>
            <person name="Ramakrishnan S."/>
            <person name="Kao W.-Y."/>
            <person name="Bergtrom G."/>
        </authorList>
    </citation>
    <scope>NUCLEOTIDE SEQUENCE [GENOMIC DNA]</scope>
</reference>
<feature type="signal peptide">
    <location>
        <begin position="1"/>
        <end position="16"/>
    </location>
</feature>
<feature type="chain" id="PRO_0000011204" description="Globin CTT-VIIB-10">
    <location>
        <begin position="17"/>
        <end position="161"/>
    </location>
</feature>
<feature type="domain" description="Globin" evidence="1">
    <location>
        <begin position="18"/>
        <end position="161"/>
    </location>
</feature>
<feature type="binding site" description="distal binding residue" evidence="1">
    <location>
        <position position="76"/>
    </location>
    <ligand>
        <name>heme b</name>
        <dbReference type="ChEBI" id="CHEBI:60344"/>
    </ligand>
    <ligandPart>
        <name>Fe</name>
        <dbReference type="ChEBI" id="CHEBI:18248"/>
    </ligandPart>
</feature>
<feature type="binding site" description="proximal binding residue" evidence="1">
    <location>
        <position position="111"/>
    </location>
    <ligand>
        <name>heme b</name>
        <dbReference type="ChEBI" id="CHEBI:60344"/>
    </ligand>
    <ligandPart>
        <name>Fe</name>
        <dbReference type="ChEBI" id="CHEBI:18248"/>
    </ligandPart>
</feature>
<keyword id="KW-0349">Heme</keyword>
<keyword id="KW-0408">Iron</keyword>
<keyword id="KW-0479">Metal-binding</keyword>
<keyword id="KW-0561">Oxygen transport</keyword>
<keyword id="KW-0732">Signal</keyword>
<keyword id="KW-0813">Transport</keyword>
<name>GLB7X_CHITH</name>
<proteinExistence type="inferred from homology"/>
<comment type="subunit">
    <text>Homodimer.</text>
</comment>
<comment type="miscellaneous">
    <text>There are at least 12 different components in Midge globin.</text>
</comment>
<comment type="miscellaneous">
    <text>There are at least nine genes for VIIB variants.</text>
</comment>
<comment type="similarity">
    <text evidence="1">Belongs to the globin family.</text>
</comment>
<accession>Q23762</accession>